<gene>
    <name evidence="1" type="primary">pagP</name>
    <name type="ordered locus">ESA_02705</name>
</gene>
<comment type="function">
    <text evidence="1">Transfers a fatty acid residue from the sn-1 position of a phospholipid to the N-linked hydroxyfatty acid chain on the proximal unit of lipid A or its precursors.</text>
</comment>
<comment type="catalytic activity">
    <reaction evidence="1">
        <text>a lipid A + a 1,2-diacyl-sn-glycero-3-phosphocholine = a hepta-acyl lipid A + a 2-acyl-sn-glycero-3-phosphocholine</text>
        <dbReference type="Rhea" id="RHEA:74275"/>
        <dbReference type="ChEBI" id="CHEBI:57643"/>
        <dbReference type="ChEBI" id="CHEBI:57875"/>
        <dbReference type="ChEBI" id="CHEBI:193141"/>
        <dbReference type="ChEBI" id="CHEBI:193142"/>
        <dbReference type="EC" id="2.3.1.251"/>
    </reaction>
</comment>
<comment type="catalytic activity">
    <reaction evidence="1">
        <text>a lipid IVA + a 1,2-diacyl-sn-glycero-3-phosphocholine = a lipid IVB + a 2-acyl-sn-glycero-3-phosphocholine</text>
        <dbReference type="Rhea" id="RHEA:74279"/>
        <dbReference type="ChEBI" id="CHEBI:57643"/>
        <dbReference type="ChEBI" id="CHEBI:57875"/>
        <dbReference type="ChEBI" id="CHEBI:176425"/>
        <dbReference type="ChEBI" id="CHEBI:193143"/>
        <dbReference type="EC" id="2.3.1.251"/>
    </reaction>
</comment>
<comment type="catalytic activity">
    <reaction evidence="1">
        <text>a lipid IIA + a 1,2-diacyl-sn-glycero-3-phosphocholine = a lipid IIB + a 2-acyl-sn-glycero-3-phosphocholine</text>
        <dbReference type="Rhea" id="RHEA:74283"/>
        <dbReference type="ChEBI" id="CHEBI:57643"/>
        <dbReference type="ChEBI" id="CHEBI:57875"/>
        <dbReference type="ChEBI" id="CHEBI:193144"/>
        <dbReference type="ChEBI" id="CHEBI:193145"/>
        <dbReference type="EC" id="2.3.1.251"/>
    </reaction>
</comment>
<comment type="subunit">
    <text evidence="1">Homodimer.</text>
</comment>
<comment type="subcellular location">
    <subcellularLocation>
        <location evidence="1">Cell outer membrane</location>
    </subcellularLocation>
</comment>
<comment type="similarity">
    <text evidence="1">Belongs to the lipid A palmitoyltransferase family.</text>
</comment>
<proteinExistence type="inferred from homology"/>
<feature type="signal peptide" evidence="1">
    <location>
        <begin position="1"/>
        <end position="26"/>
    </location>
</feature>
<feature type="chain" id="PRO_0000414441" description="Lipid A acyltransferase PagP">
    <location>
        <begin position="27"/>
        <end position="192"/>
    </location>
</feature>
<feature type="active site" evidence="1">
    <location>
        <position position="64"/>
    </location>
</feature>
<feature type="active site" evidence="1">
    <location>
        <position position="107"/>
    </location>
</feature>
<feature type="active site" evidence="1">
    <location>
        <position position="108"/>
    </location>
</feature>
<feature type="site" description="Role in lipopolysaccharide recognition" evidence="1">
    <location>
        <position position="73"/>
    </location>
</feature>
<feature type="site" description="Role in the phospholipid gating" evidence="1">
    <location>
        <position position="178"/>
    </location>
</feature>
<dbReference type="EC" id="2.3.1.251" evidence="1"/>
<dbReference type="EMBL" id="CP000783">
    <property type="protein sequence ID" value="ABU77937.1"/>
    <property type="molecule type" value="Genomic_DNA"/>
</dbReference>
<dbReference type="RefSeq" id="WP_007865575.1">
    <property type="nucleotide sequence ID" value="NC_009778.1"/>
</dbReference>
<dbReference type="SMR" id="A7MNQ4"/>
<dbReference type="GeneID" id="56731497"/>
<dbReference type="KEGG" id="esa:ESA_02705"/>
<dbReference type="HOGENOM" id="CLU_104099_0_0_6"/>
<dbReference type="Proteomes" id="UP000000260">
    <property type="component" value="Chromosome"/>
</dbReference>
<dbReference type="GO" id="GO:0009279">
    <property type="term" value="C:cell outer membrane"/>
    <property type="evidence" value="ECO:0007669"/>
    <property type="project" value="UniProtKB-SubCell"/>
</dbReference>
<dbReference type="GO" id="GO:0016746">
    <property type="term" value="F:acyltransferase activity"/>
    <property type="evidence" value="ECO:0007669"/>
    <property type="project" value="UniProtKB-UniRule"/>
</dbReference>
<dbReference type="GO" id="GO:0009245">
    <property type="term" value="P:lipid A biosynthetic process"/>
    <property type="evidence" value="ECO:0007669"/>
    <property type="project" value="UniProtKB-UniRule"/>
</dbReference>
<dbReference type="FunFam" id="2.40.160.20:FF:000002">
    <property type="entry name" value="Lipid A palmitoyltransferase PagP"/>
    <property type="match status" value="1"/>
</dbReference>
<dbReference type="Gene3D" id="2.40.160.20">
    <property type="match status" value="1"/>
</dbReference>
<dbReference type="HAMAP" id="MF_00837">
    <property type="entry name" value="PagP_transferase"/>
    <property type="match status" value="1"/>
</dbReference>
<dbReference type="InterPro" id="IPR009746">
    <property type="entry name" value="LipidA_acyl_PagP"/>
</dbReference>
<dbReference type="InterPro" id="IPR011250">
    <property type="entry name" value="OMP/PagP_b-brl"/>
</dbReference>
<dbReference type="NCBIfam" id="NF008271">
    <property type="entry name" value="PRK11045.1"/>
    <property type="match status" value="1"/>
</dbReference>
<dbReference type="Pfam" id="PF07017">
    <property type="entry name" value="PagP"/>
    <property type="match status" value="1"/>
</dbReference>
<dbReference type="SUPFAM" id="SSF56925">
    <property type="entry name" value="OMPA-like"/>
    <property type="match status" value="1"/>
</dbReference>
<keyword id="KW-0012">Acyltransferase</keyword>
<keyword id="KW-0998">Cell outer membrane</keyword>
<keyword id="KW-0472">Membrane</keyword>
<keyword id="KW-1185">Reference proteome</keyword>
<keyword id="KW-0732">Signal</keyword>
<keyword id="KW-0808">Transferase</keyword>
<protein>
    <recommendedName>
        <fullName evidence="1">Lipid A acyltransferase PagP</fullName>
        <ecNumber evidence="1">2.3.1.251</ecNumber>
    </recommendedName>
    <alternativeName>
        <fullName evidence="1">Lipid A acylation protein</fullName>
    </alternativeName>
</protein>
<organism>
    <name type="scientific">Cronobacter sakazakii (strain ATCC BAA-894)</name>
    <name type="common">Enterobacter sakazakii</name>
    <dbReference type="NCBI Taxonomy" id="290339"/>
    <lineage>
        <taxon>Bacteria</taxon>
        <taxon>Pseudomonadati</taxon>
        <taxon>Pseudomonadota</taxon>
        <taxon>Gammaproteobacteria</taxon>
        <taxon>Enterobacterales</taxon>
        <taxon>Enterobacteriaceae</taxon>
        <taxon>Cronobacter</taxon>
    </lineage>
</organism>
<name>PAGP_CROS8</name>
<accession>A7MNQ4</accession>
<reference key="1">
    <citation type="journal article" date="2010" name="PLoS ONE">
        <title>Genome sequence of Cronobacter sakazakii BAA-894 and comparative genomic hybridization analysis with other Cronobacter species.</title>
        <authorList>
            <person name="Kucerova E."/>
            <person name="Clifton S.W."/>
            <person name="Xia X.Q."/>
            <person name="Long F."/>
            <person name="Porwollik S."/>
            <person name="Fulton L."/>
            <person name="Fronick C."/>
            <person name="Minx P."/>
            <person name="Kyung K."/>
            <person name="Warren W."/>
            <person name="Fulton R."/>
            <person name="Feng D."/>
            <person name="Wollam A."/>
            <person name="Shah N."/>
            <person name="Bhonagiri V."/>
            <person name="Nash W.E."/>
            <person name="Hallsworth-Pepin K."/>
            <person name="Wilson R.K."/>
            <person name="McClelland M."/>
            <person name="Forsythe S.J."/>
        </authorList>
    </citation>
    <scope>NUCLEOTIDE SEQUENCE [LARGE SCALE GENOMIC DNA]</scope>
    <source>
        <strain>ATCC BAA-894</strain>
    </source>
</reference>
<sequence>MTVVNKSFLTILIFFCQILFPLNASALEAPRTVKAWASVLGDNIAETWNEPQHVDLYVPAITWHARFAYDKEKTDRYNERPWGAGMGKSRWDEKGNWHGLYVMAFKDSYNKWEPIAGYGWEATWRPLTDDAFHVGLGYTVGVTARDNWDYIPIPLVLPLASVGYGPATFQMTYIPGTYNNGNVYFAWLRLQF</sequence>
<evidence type="ECO:0000255" key="1">
    <source>
        <dbReference type="HAMAP-Rule" id="MF_00837"/>
    </source>
</evidence>